<gene>
    <name evidence="1" type="primary">purH</name>
    <name type="ordered locus">Smed_3189</name>
</gene>
<organism>
    <name type="scientific">Sinorhizobium medicae (strain WSM419)</name>
    <name type="common">Ensifer medicae</name>
    <dbReference type="NCBI Taxonomy" id="366394"/>
    <lineage>
        <taxon>Bacteria</taxon>
        <taxon>Pseudomonadati</taxon>
        <taxon>Pseudomonadota</taxon>
        <taxon>Alphaproteobacteria</taxon>
        <taxon>Hyphomicrobiales</taxon>
        <taxon>Rhizobiaceae</taxon>
        <taxon>Sinorhizobium/Ensifer group</taxon>
        <taxon>Sinorhizobium</taxon>
    </lineage>
</organism>
<evidence type="ECO:0000255" key="1">
    <source>
        <dbReference type="HAMAP-Rule" id="MF_00139"/>
    </source>
</evidence>
<evidence type="ECO:0000255" key="2">
    <source>
        <dbReference type="PROSITE-ProRule" id="PRU01202"/>
    </source>
</evidence>
<dbReference type="EC" id="2.1.2.3" evidence="1"/>
<dbReference type="EC" id="3.5.4.10" evidence="1"/>
<dbReference type="EMBL" id="CP000738">
    <property type="protein sequence ID" value="ABR62013.1"/>
    <property type="molecule type" value="Genomic_DNA"/>
</dbReference>
<dbReference type="RefSeq" id="WP_012067394.1">
    <property type="nucleotide sequence ID" value="NC_009636.1"/>
</dbReference>
<dbReference type="RefSeq" id="YP_001328848.1">
    <property type="nucleotide sequence ID" value="NC_009636.1"/>
</dbReference>
<dbReference type="SMR" id="A6UED3"/>
<dbReference type="STRING" id="366394.Smed_3189"/>
<dbReference type="GeneID" id="61610771"/>
<dbReference type="KEGG" id="smd:Smed_3189"/>
<dbReference type="PATRIC" id="fig|366394.8.peg.6426"/>
<dbReference type="eggNOG" id="COG0138">
    <property type="taxonomic scope" value="Bacteria"/>
</dbReference>
<dbReference type="HOGENOM" id="CLU_016316_5_2_5"/>
<dbReference type="OrthoDB" id="9802065at2"/>
<dbReference type="UniPathway" id="UPA00074">
    <property type="reaction ID" value="UER00133"/>
</dbReference>
<dbReference type="UniPathway" id="UPA00074">
    <property type="reaction ID" value="UER00135"/>
</dbReference>
<dbReference type="Proteomes" id="UP000001108">
    <property type="component" value="Chromosome"/>
</dbReference>
<dbReference type="GO" id="GO:0005829">
    <property type="term" value="C:cytosol"/>
    <property type="evidence" value="ECO:0007669"/>
    <property type="project" value="TreeGrafter"/>
</dbReference>
<dbReference type="GO" id="GO:0003937">
    <property type="term" value="F:IMP cyclohydrolase activity"/>
    <property type="evidence" value="ECO:0007669"/>
    <property type="project" value="UniProtKB-UniRule"/>
</dbReference>
<dbReference type="GO" id="GO:0004643">
    <property type="term" value="F:phosphoribosylaminoimidazolecarboxamide formyltransferase activity"/>
    <property type="evidence" value="ECO:0007669"/>
    <property type="project" value="UniProtKB-UniRule"/>
</dbReference>
<dbReference type="GO" id="GO:0006189">
    <property type="term" value="P:'de novo' IMP biosynthetic process"/>
    <property type="evidence" value="ECO:0007669"/>
    <property type="project" value="UniProtKB-UniRule"/>
</dbReference>
<dbReference type="CDD" id="cd01421">
    <property type="entry name" value="IMPCH"/>
    <property type="match status" value="1"/>
</dbReference>
<dbReference type="FunFam" id="3.40.140.20:FF:000001">
    <property type="entry name" value="Bifunctional purine biosynthesis protein PurH"/>
    <property type="match status" value="1"/>
</dbReference>
<dbReference type="FunFam" id="3.40.140.20:FF:000002">
    <property type="entry name" value="Bifunctional purine biosynthesis protein PurH"/>
    <property type="match status" value="1"/>
</dbReference>
<dbReference type="FunFam" id="3.40.50.1380:FF:000001">
    <property type="entry name" value="Bifunctional purine biosynthesis protein PurH"/>
    <property type="match status" value="1"/>
</dbReference>
<dbReference type="Gene3D" id="3.40.140.20">
    <property type="match status" value="2"/>
</dbReference>
<dbReference type="Gene3D" id="3.40.50.1380">
    <property type="entry name" value="Methylglyoxal synthase-like domain"/>
    <property type="match status" value="1"/>
</dbReference>
<dbReference type="HAMAP" id="MF_00139">
    <property type="entry name" value="PurH"/>
    <property type="match status" value="1"/>
</dbReference>
<dbReference type="InterPro" id="IPR024051">
    <property type="entry name" value="AICAR_Tfase_dup_dom_sf"/>
</dbReference>
<dbReference type="InterPro" id="IPR016193">
    <property type="entry name" value="Cytidine_deaminase-like"/>
</dbReference>
<dbReference type="InterPro" id="IPR011607">
    <property type="entry name" value="MGS-like_dom"/>
</dbReference>
<dbReference type="InterPro" id="IPR036914">
    <property type="entry name" value="MGS-like_dom_sf"/>
</dbReference>
<dbReference type="InterPro" id="IPR002695">
    <property type="entry name" value="PurH-like"/>
</dbReference>
<dbReference type="NCBIfam" id="NF002049">
    <property type="entry name" value="PRK00881.1"/>
    <property type="match status" value="1"/>
</dbReference>
<dbReference type="NCBIfam" id="TIGR00355">
    <property type="entry name" value="purH"/>
    <property type="match status" value="1"/>
</dbReference>
<dbReference type="PANTHER" id="PTHR11692:SF0">
    <property type="entry name" value="BIFUNCTIONAL PURINE BIOSYNTHESIS PROTEIN ATIC"/>
    <property type="match status" value="1"/>
</dbReference>
<dbReference type="PANTHER" id="PTHR11692">
    <property type="entry name" value="BIFUNCTIONAL PURINE BIOSYNTHESIS PROTEIN PURH"/>
    <property type="match status" value="1"/>
</dbReference>
<dbReference type="Pfam" id="PF01808">
    <property type="entry name" value="AICARFT_IMPCHas"/>
    <property type="match status" value="1"/>
</dbReference>
<dbReference type="Pfam" id="PF02142">
    <property type="entry name" value="MGS"/>
    <property type="match status" value="1"/>
</dbReference>
<dbReference type="PIRSF" id="PIRSF000414">
    <property type="entry name" value="AICARFT_IMPCHas"/>
    <property type="match status" value="1"/>
</dbReference>
<dbReference type="SMART" id="SM00798">
    <property type="entry name" value="AICARFT_IMPCHas"/>
    <property type="match status" value="1"/>
</dbReference>
<dbReference type="SMART" id="SM00851">
    <property type="entry name" value="MGS"/>
    <property type="match status" value="1"/>
</dbReference>
<dbReference type="SUPFAM" id="SSF53927">
    <property type="entry name" value="Cytidine deaminase-like"/>
    <property type="match status" value="1"/>
</dbReference>
<dbReference type="SUPFAM" id="SSF52335">
    <property type="entry name" value="Methylglyoxal synthase-like"/>
    <property type="match status" value="1"/>
</dbReference>
<dbReference type="PROSITE" id="PS51855">
    <property type="entry name" value="MGS"/>
    <property type="match status" value="1"/>
</dbReference>
<accession>A6UED3</accession>
<feature type="chain" id="PRO_1000018959" description="Bifunctional purine biosynthesis protein PurH">
    <location>
        <begin position="1"/>
        <end position="536"/>
    </location>
</feature>
<feature type="domain" description="MGS-like" evidence="2">
    <location>
        <begin position="8"/>
        <end position="158"/>
    </location>
</feature>
<proteinExistence type="inferred from homology"/>
<comment type="catalytic activity">
    <reaction evidence="1">
        <text>(6R)-10-formyltetrahydrofolate + 5-amino-1-(5-phospho-beta-D-ribosyl)imidazole-4-carboxamide = 5-formamido-1-(5-phospho-D-ribosyl)imidazole-4-carboxamide + (6S)-5,6,7,8-tetrahydrofolate</text>
        <dbReference type="Rhea" id="RHEA:22192"/>
        <dbReference type="ChEBI" id="CHEBI:57453"/>
        <dbReference type="ChEBI" id="CHEBI:58467"/>
        <dbReference type="ChEBI" id="CHEBI:58475"/>
        <dbReference type="ChEBI" id="CHEBI:195366"/>
        <dbReference type="EC" id="2.1.2.3"/>
    </reaction>
</comment>
<comment type="catalytic activity">
    <reaction evidence="1">
        <text>IMP + H2O = 5-formamido-1-(5-phospho-D-ribosyl)imidazole-4-carboxamide</text>
        <dbReference type="Rhea" id="RHEA:18445"/>
        <dbReference type="ChEBI" id="CHEBI:15377"/>
        <dbReference type="ChEBI" id="CHEBI:58053"/>
        <dbReference type="ChEBI" id="CHEBI:58467"/>
        <dbReference type="EC" id="3.5.4.10"/>
    </reaction>
</comment>
<comment type="pathway">
    <text evidence="1">Purine metabolism; IMP biosynthesis via de novo pathway; 5-formamido-1-(5-phospho-D-ribosyl)imidazole-4-carboxamide from 5-amino-1-(5-phospho-D-ribosyl)imidazole-4-carboxamide (10-formyl THF route): step 1/1.</text>
</comment>
<comment type="pathway">
    <text evidence="1">Purine metabolism; IMP biosynthesis via de novo pathway; IMP from 5-formamido-1-(5-phospho-D-ribosyl)imidazole-4-carboxamide: step 1/1.</text>
</comment>
<comment type="domain">
    <text evidence="1">The IMP cyclohydrolase activity resides in the N-terminal region.</text>
</comment>
<comment type="similarity">
    <text evidence="1">Belongs to the PurH family.</text>
</comment>
<sequence>MAVASKKIPAPDEVRIKTALLSVSDKSGIVELARHLNDRGVRLVSTGGTHKALADAGLPVSDVSELTGFPEIMDGRVKTLHPGVHGGLLAIRDDAEHAGAMSAHGITAIDLAVINLYPFEEVRAKGGDYPTTVENIDIGGPAMIRASAKNHAYVTVVTDPADYPLLLEEIAGGTTRYAFRQKMAAKAYARTAAYDAAISNWFAEVLDTPMPRHRVIGGVLKEEMRYGENPHQKAGFYVTGDKRPGVATAALLQGKQLSYNNINDTDAAFELVAEFLPEKAPACAIIKHANPCGVATAPSLAEAYRRALACDSTSAFGGIIALNQELDAATAEEIVKLFTEVIIAPSVSDEAKAIIARKPNLRLLATGGLPDPRTPGLTAKTVAGGLLVQTRDDGMIEDIELKVVTKRTPTAQELEDMKFAFKVAKHVKSNAVVYAKGGQTAGIGAGQMSRVDSARIAAIKAEEAAKALGLAEPLTRGSAVASEAFLPFADGLLSAIAAGATAVIQPGGSMRDEEVIAAADEHNVAMVFTGMRHFRH</sequence>
<protein>
    <recommendedName>
        <fullName evidence="1">Bifunctional purine biosynthesis protein PurH</fullName>
    </recommendedName>
    <domain>
        <recommendedName>
            <fullName evidence="1">Phosphoribosylaminoimidazolecarboxamide formyltransferase</fullName>
            <ecNumber evidence="1">2.1.2.3</ecNumber>
        </recommendedName>
        <alternativeName>
            <fullName evidence="1">AICAR transformylase</fullName>
        </alternativeName>
    </domain>
    <domain>
        <recommendedName>
            <fullName evidence="1">IMP cyclohydrolase</fullName>
            <ecNumber evidence="1">3.5.4.10</ecNumber>
        </recommendedName>
        <alternativeName>
            <fullName evidence="1">ATIC</fullName>
        </alternativeName>
        <alternativeName>
            <fullName evidence="1">IMP synthase</fullName>
        </alternativeName>
        <alternativeName>
            <fullName evidence="1">Inosinicase</fullName>
        </alternativeName>
    </domain>
</protein>
<keyword id="KW-0378">Hydrolase</keyword>
<keyword id="KW-0511">Multifunctional enzyme</keyword>
<keyword id="KW-0658">Purine biosynthesis</keyword>
<keyword id="KW-0808">Transferase</keyword>
<reference key="1">
    <citation type="submission" date="2007-06" db="EMBL/GenBank/DDBJ databases">
        <title>Complete sequence of Sinorhizobium medicae WSM419 chromosome.</title>
        <authorList>
            <consortium name="US DOE Joint Genome Institute"/>
            <person name="Copeland A."/>
            <person name="Lucas S."/>
            <person name="Lapidus A."/>
            <person name="Barry K."/>
            <person name="Glavina del Rio T."/>
            <person name="Dalin E."/>
            <person name="Tice H."/>
            <person name="Pitluck S."/>
            <person name="Chain P."/>
            <person name="Malfatti S."/>
            <person name="Shin M."/>
            <person name="Vergez L."/>
            <person name="Schmutz J."/>
            <person name="Larimer F."/>
            <person name="Land M."/>
            <person name="Hauser L."/>
            <person name="Kyrpides N."/>
            <person name="Mikhailova N."/>
            <person name="Reeve W.G."/>
            <person name="Richardson P."/>
        </authorList>
    </citation>
    <scope>NUCLEOTIDE SEQUENCE [LARGE SCALE GENOMIC DNA]</scope>
    <source>
        <strain>WSM419</strain>
    </source>
</reference>
<name>PUR9_SINMW</name>